<comment type="function">
    <text evidence="2">As part of the BORC complex may play a role in lysosomes movement and localization at the cell periphery. Associated with the cytosolic face of lysosomes, the BORC complex may recruit ARL8B and couple lysosomes to microtubule plus-end-directed kinesin motor.</text>
</comment>
<comment type="subunit">
    <text evidence="2">Component of the BLOC-one-related complex (BORC) which is composed of BLOC1S1, BLOC1S2, BORCS5, BORCS6, BORCS7, BORCS8, KXD1 and SNAPIN.</text>
</comment>
<comment type="interaction">
    <interactant intactId="EBI-10193358">
        <id>Q96GS4</id>
    </interactant>
    <interactant intactId="EBI-11096309">
        <id>Q9NYB9-2</id>
        <label>ABI2</label>
    </interactant>
    <organismsDiffer>false</organismsDiffer>
    <experiments>5</experiments>
</comment>
<comment type="interaction">
    <interactant intactId="EBI-10193358">
        <id>Q96GS4</id>
    </interactant>
    <interactant intactId="EBI-8643161">
        <id>Q9NX04</id>
        <label>AIRIM</label>
    </interactant>
    <organismsDiffer>false</organismsDiffer>
    <experiments>3</experiments>
</comment>
<comment type="interaction">
    <interactant intactId="EBI-10193358">
        <id>Q96GS4</id>
    </interactant>
    <interactant intactId="EBI-745073">
        <id>Q9BXY8</id>
        <label>BEX2</label>
    </interactant>
    <organismsDiffer>false</organismsDiffer>
    <experiments>3</experiments>
</comment>
<comment type="interaction">
    <interactant intactId="EBI-10193358">
        <id>Q96GS4</id>
    </interactant>
    <interactant intactId="EBI-10193358">
        <id>Q96GS4</id>
        <label>BORCS6</label>
    </interactant>
    <organismsDiffer>false</organismsDiffer>
    <experiments>3</experiments>
</comment>
<comment type="interaction">
    <interactant intactId="EBI-10193358">
        <id>Q96GS4</id>
    </interactant>
    <interactant intactId="EBI-741214">
        <id>Q9UFG5</id>
        <label>C19orf25</label>
    </interactant>
    <organismsDiffer>false</organismsDiffer>
    <experiments>3</experiments>
</comment>
<comment type="interaction">
    <interactant intactId="EBI-10193358">
        <id>Q96GS4</id>
    </interactant>
    <interactant intactId="EBI-747505">
        <id>Q8TAB5</id>
        <label>C1orf216</label>
    </interactant>
    <organismsDiffer>false</organismsDiffer>
    <experiments>3</experiments>
</comment>
<comment type="interaction">
    <interactant intactId="EBI-10193358">
        <id>Q96GS4</id>
    </interactant>
    <interactant intactId="EBI-10175300">
        <id>Q8TD31-3</id>
        <label>CCHCR1</label>
    </interactant>
    <organismsDiffer>false</organismsDiffer>
    <experiments>3</experiments>
</comment>
<comment type="interaction">
    <interactant intactId="EBI-10193358">
        <id>Q96GS4</id>
    </interactant>
    <interactant intactId="EBI-715074">
        <id>Q13561</id>
        <label>DCTN2</label>
    </interactant>
    <organismsDiffer>false</organismsDiffer>
    <experiments>4</experiments>
</comment>
<comment type="interaction">
    <interactant intactId="EBI-10193358">
        <id>Q96GS4</id>
    </interactant>
    <interactant intactId="EBI-11988027">
        <id>Q9NRI5-2</id>
        <label>DISC1</label>
    </interactant>
    <organismsDiffer>false</organismsDiffer>
    <experiments>4</experiments>
</comment>
<comment type="interaction">
    <interactant intactId="EBI-10193358">
        <id>Q96GS4</id>
    </interactant>
    <interactant intactId="EBI-375576">
        <id>Q12929</id>
        <label>EPS8</label>
    </interactant>
    <organismsDiffer>false</organismsDiffer>
    <experiments>3</experiments>
</comment>
<comment type="interaction">
    <interactant intactId="EBI-10193358">
        <id>Q96GS4</id>
    </interactant>
    <interactant intactId="EBI-742102">
        <id>Q8IYI6</id>
        <label>EXOC8</label>
    </interactant>
    <organismsDiffer>false</organismsDiffer>
    <experiments>3</experiments>
</comment>
<comment type="interaction">
    <interactant intactId="EBI-10193358">
        <id>Q96GS4</id>
    </interactant>
    <interactant intactId="EBI-371876">
        <id>Q9NQT4</id>
        <label>EXOSC5</label>
    </interactant>
    <organismsDiffer>false</organismsDiffer>
    <experiments>3</experiments>
</comment>
<comment type="interaction">
    <interactant intactId="EBI-10193358">
        <id>Q96GS4</id>
    </interactant>
    <interactant intactId="EBI-7225287">
        <id>Q96MY7</id>
        <label>FAM161B</label>
    </interactant>
    <organismsDiffer>false</organismsDiffer>
    <experiments>3</experiments>
</comment>
<comment type="interaction">
    <interactant intactId="EBI-10193358">
        <id>Q96GS4</id>
    </interactant>
    <interactant intactId="EBI-2870039">
        <id>Q8IZT9</id>
        <label>FAM9C</label>
    </interactant>
    <organismsDiffer>false</organismsDiffer>
    <experiments>3</experiments>
</comment>
<comment type="interaction">
    <interactant intactId="EBI-10193358">
        <id>Q96GS4</id>
    </interactant>
    <interactant intactId="EBI-2322644">
        <id>Q9H4M3</id>
        <label>FBXO44</label>
    </interactant>
    <organismsDiffer>false</organismsDiffer>
    <experiments>4</experiments>
</comment>
<comment type="interaction">
    <interactant intactId="EBI-10193358">
        <id>Q96GS4</id>
    </interactant>
    <interactant intactId="EBI-12104696">
        <id>Q9H4M3-2</id>
        <label>FBXO44</label>
    </interactant>
    <organismsDiffer>false</organismsDiffer>
    <experiments>8</experiments>
</comment>
<comment type="interaction">
    <interactant intactId="EBI-10193358">
        <id>Q96GS4</id>
    </interactant>
    <interactant intactId="EBI-11958845">
        <id>O94868-3</id>
        <label>FCHSD2</label>
    </interactant>
    <organismsDiffer>false</organismsDiffer>
    <experiments>4</experiments>
</comment>
<comment type="interaction">
    <interactant intactId="EBI-10193358">
        <id>Q96GS4</id>
    </interactant>
    <interactant intactId="EBI-1052570">
        <id>O95995</id>
        <label>GAS8</label>
    </interactant>
    <organismsDiffer>false</organismsDiffer>
    <experiments>3</experiments>
</comment>
<comment type="interaction">
    <interactant intactId="EBI-10193358">
        <id>Q96GS4</id>
    </interactant>
    <interactant intactId="EBI-2514791">
        <id>Q96CS2</id>
        <label>HAUS1</label>
    </interactant>
    <organismsDiffer>false</organismsDiffer>
    <experiments>3</experiments>
</comment>
<comment type="interaction">
    <interactant intactId="EBI-10193358">
        <id>Q96GS4</id>
    </interactant>
    <interactant intactId="EBI-740220">
        <id>O14964</id>
        <label>HGS</label>
    </interactant>
    <organismsDiffer>false</organismsDiffer>
    <experiments>3</experiments>
</comment>
<comment type="interaction">
    <interactant intactId="EBI-10193358">
        <id>Q96GS4</id>
    </interactant>
    <interactant intactId="EBI-4311436">
        <id>Q2T9L4</id>
        <label>INSYN1</label>
    </interactant>
    <organismsDiffer>false</organismsDiffer>
    <experiments>4</experiments>
</comment>
<comment type="interaction">
    <interactant intactId="EBI-10193358">
        <id>Q96GS4</id>
    </interactant>
    <interactant intactId="EBI-2556193">
        <id>Q63ZY3</id>
        <label>KANK2</label>
    </interactant>
    <organismsDiffer>false</organismsDiffer>
    <experiments>3</experiments>
</comment>
<comment type="interaction">
    <interactant intactId="EBI-10193358">
        <id>Q96GS4</id>
    </interactant>
    <interactant intactId="EBI-739657">
        <id>Q9BQD3</id>
        <label>KXD1</label>
    </interactant>
    <organismsDiffer>false</organismsDiffer>
    <experiments>7</experiments>
</comment>
<comment type="interaction">
    <interactant intactId="EBI-10193358">
        <id>Q96GS4</id>
    </interactant>
    <interactant intactId="EBI-2643704">
        <id>Q9Y2Q5</id>
        <label>LAMTOR2</label>
    </interactant>
    <organismsDiffer>false</organismsDiffer>
    <experiments>7</experiments>
</comment>
<comment type="interaction">
    <interactant intactId="EBI-10193358">
        <id>Q96GS4</id>
    </interactant>
    <interactant intactId="EBI-739832">
        <id>Q8TBB1</id>
        <label>LNX1</label>
    </interactant>
    <organismsDiffer>false</organismsDiffer>
    <experiments>3</experiments>
</comment>
<comment type="interaction">
    <interactant intactId="EBI-10193358">
        <id>Q96GS4</id>
    </interactant>
    <interactant intactId="EBI-394678">
        <id>Q13503</id>
        <label>MED21</label>
    </interactant>
    <organismsDiffer>false</organismsDiffer>
    <experiments>3</experiments>
</comment>
<comment type="interaction">
    <interactant intactId="EBI-10193358">
        <id>Q96GS4</id>
    </interactant>
    <interactant intactId="EBI-1757866">
        <id>P00540</id>
        <label>MOS</label>
    </interactant>
    <organismsDiffer>false</organismsDiffer>
    <experiments>4</experiments>
</comment>
<comment type="interaction">
    <interactant intactId="EBI-10193358">
        <id>Q96GS4</id>
    </interactant>
    <interactant intactId="EBI-928842">
        <id>Q9GZM8</id>
        <label>NDEL1</label>
    </interactant>
    <organismsDiffer>false</organismsDiffer>
    <experiments>6</experiments>
</comment>
<comment type="interaction">
    <interactant intactId="EBI-10193358">
        <id>Q96GS4</id>
    </interactant>
    <interactant intactId="EBI-741158">
        <id>Q96HA8</id>
        <label>NTAQ1</label>
    </interactant>
    <organismsDiffer>false</organismsDiffer>
    <experiments>3</experiments>
</comment>
<comment type="interaction">
    <interactant intactId="EBI-10193358">
        <id>Q96GS4</id>
    </interactant>
    <interactant intactId="EBI-1373569">
        <id>P55347</id>
        <label>PKNOX1</label>
    </interactant>
    <organismsDiffer>false</organismsDiffer>
    <experiments>4</experiments>
</comment>
<comment type="interaction">
    <interactant intactId="EBI-10193358">
        <id>Q96GS4</id>
    </interactant>
    <interactant intactId="EBI-1504830">
        <id>Q9P2K3-2</id>
        <label>RCOR3</label>
    </interactant>
    <organismsDiffer>false</organismsDiffer>
    <experiments>3</experiments>
</comment>
<comment type="interaction">
    <interactant intactId="EBI-10193358">
        <id>Q96GS4</id>
    </interactant>
    <interactant intactId="EBI-10265323">
        <id>Q8N443</id>
        <label>RIBC1</label>
    </interactant>
    <organismsDiffer>false</organismsDiffer>
    <experiments>3</experiments>
</comment>
<comment type="interaction">
    <interactant intactId="EBI-10193358">
        <id>Q96GS4</id>
    </interactant>
    <interactant intactId="EBI-714105">
        <id>Q149N8</id>
        <label>SHPRH</label>
    </interactant>
    <organismsDiffer>false</organismsDiffer>
    <experiments>3</experiments>
</comment>
<comment type="interaction">
    <interactant intactId="EBI-10193358">
        <id>Q96GS4</id>
    </interactant>
    <interactant intactId="EBI-742688">
        <id>Q9NZD8</id>
        <label>SPG21</label>
    </interactant>
    <organismsDiffer>false</organismsDiffer>
    <experiments>3</experiments>
</comment>
<comment type="interaction">
    <interactant intactId="EBI-10193358">
        <id>Q96GS4</id>
    </interactant>
    <interactant intactId="EBI-14211313">
        <id>B2RWP4</id>
        <label>TACC2</label>
    </interactant>
    <organismsDiffer>false</organismsDiffer>
    <experiments>6</experiments>
</comment>
<comment type="interaction">
    <interactant intactId="EBI-10193358">
        <id>Q96GS4</id>
    </interactant>
    <interactant intactId="EBI-739895">
        <id>Q8N6Y0</id>
        <label>USHBP1</label>
    </interactant>
    <organismsDiffer>false</organismsDiffer>
    <experiments>3</experiments>
</comment>
<comment type="interaction">
    <interactant intactId="EBI-10193358">
        <id>Q96GS4</id>
    </interactant>
    <interactant intactId="EBI-2799833">
        <id>Q8N1B4</id>
        <label>VPS52</label>
    </interactant>
    <organismsDiffer>false</organismsDiffer>
    <experiments>3</experiments>
</comment>
<comment type="interaction">
    <interactant intactId="EBI-10193358">
        <id>Q96GS4</id>
    </interactant>
    <interactant intactId="EBI-625509">
        <id>Q8N720</id>
        <label>ZNF655</label>
    </interactant>
    <organismsDiffer>false</organismsDiffer>
    <experiments>3</experiments>
</comment>
<comment type="subcellular location">
    <subcellularLocation>
        <location evidence="5">Lysosome membrane</location>
    </subcellularLocation>
</comment>
<comment type="similarity">
    <text evidence="4">Belongs to the BORCS6 family.</text>
</comment>
<comment type="sequence caution" evidence="4">
    <conflict type="erroneous initiation">
        <sequence resource="EMBL-CDS" id="AAH09261"/>
    </conflict>
    <text>Truncated N-terminus.</text>
</comment>
<comment type="sequence caution" evidence="4">
    <conflict type="erroneous initiation">
        <sequence resource="EMBL-CDS" id="AAH18880"/>
    </conflict>
    <text>Truncated N-terminus.</text>
</comment>
<comment type="sequence caution" evidence="4">
    <conflict type="erroneous initiation">
        <sequence resource="EMBL-CDS" id="AAH70272"/>
    </conflict>
    <text>Truncated N-terminus.</text>
</comment>
<comment type="sequence caution" evidence="4">
    <conflict type="erroneous initiation">
        <sequence resource="EMBL-CDS" id="BAA90889"/>
    </conflict>
    <text>Truncated N-terminus.</text>
</comment>
<comment type="sequence caution" evidence="4">
    <conflict type="erroneous initiation">
        <sequence resource="EMBL-CDS" id="BAD96226"/>
    </conflict>
    <text>Truncated N-terminus.</text>
</comment>
<reference key="1">
    <citation type="journal article" date="2006" name="Nature">
        <title>DNA sequence of human chromosome 17 and analysis of rearrangement in the human lineage.</title>
        <authorList>
            <person name="Zody M.C."/>
            <person name="Garber M."/>
            <person name="Adams D.J."/>
            <person name="Sharpe T."/>
            <person name="Harrow J."/>
            <person name="Lupski J.R."/>
            <person name="Nicholson C."/>
            <person name="Searle S.M."/>
            <person name="Wilming L."/>
            <person name="Young S.K."/>
            <person name="Abouelleil A."/>
            <person name="Allen N.R."/>
            <person name="Bi W."/>
            <person name="Bloom T."/>
            <person name="Borowsky M.L."/>
            <person name="Bugalter B.E."/>
            <person name="Butler J."/>
            <person name="Chang J.L."/>
            <person name="Chen C.-K."/>
            <person name="Cook A."/>
            <person name="Corum B."/>
            <person name="Cuomo C.A."/>
            <person name="de Jong P.J."/>
            <person name="DeCaprio D."/>
            <person name="Dewar K."/>
            <person name="FitzGerald M."/>
            <person name="Gilbert J."/>
            <person name="Gibson R."/>
            <person name="Gnerre S."/>
            <person name="Goldstein S."/>
            <person name="Grafham D.V."/>
            <person name="Grocock R."/>
            <person name="Hafez N."/>
            <person name="Hagopian D.S."/>
            <person name="Hart E."/>
            <person name="Norman C.H."/>
            <person name="Humphray S."/>
            <person name="Jaffe D.B."/>
            <person name="Jones M."/>
            <person name="Kamal M."/>
            <person name="Khodiyar V.K."/>
            <person name="LaButti K."/>
            <person name="Laird G."/>
            <person name="Lehoczky J."/>
            <person name="Liu X."/>
            <person name="Lokyitsang T."/>
            <person name="Loveland J."/>
            <person name="Lui A."/>
            <person name="Macdonald P."/>
            <person name="Major J.E."/>
            <person name="Matthews L."/>
            <person name="Mauceli E."/>
            <person name="McCarroll S.A."/>
            <person name="Mihalev A.H."/>
            <person name="Mudge J."/>
            <person name="Nguyen C."/>
            <person name="Nicol R."/>
            <person name="O'Leary S.B."/>
            <person name="Osoegawa K."/>
            <person name="Schwartz D.C."/>
            <person name="Shaw-Smith C."/>
            <person name="Stankiewicz P."/>
            <person name="Steward C."/>
            <person name="Swarbreck D."/>
            <person name="Venkataraman V."/>
            <person name="Whittaker C.A."/>
            <person name="Yang X."/>
            <person name="Zimmer A.R."/>
            <person name="Bradley A."/>
            <person name="Hubbard T."/>
            <person name="Birren B.W."/>
            <person name="Rogers J."/>
            <person name="Lander E.S."/>
            <person name="Nusbaum C."/>
        </authorList>
    </citation>
    <scope>NUCLEOTIDE SEQUENCE [LARGE SCALE GENOMIC DNA]</scope>
</reference>
<reference key="2">
    <citation type="journal article" date="2004" name="Genome Res.">
        <title>The status, quality, and expansion of the NIH full-length cDNA project: the Mammalian Gene Collection (MGC).</title>
        <authorList>
            <consortium name="The MGC Project Team"/>
        </authorList>
    </citation>
    <scope>NUCLEOTIDE SEQUENCE [LARGE SCALE MRNA]</scope>
    <source>
        <tissue>Lung</tissue>
        <tissue>Ovary</tissue>
        <tissue>Skin</tissue>
    </source>
</reference>
<reference key="3">
    <citation type="journal article" date="2004" name="Nat. Genet.">
        <title>Complete sequencing and characterization of 21,243 full-length human cDNAs.</title>
        <authorList>
            <person name="Ota T."/>
            <person name="Suzuki Y."/>
            <person name="Nishikawa T."/>
            <person name="Otsuki T."/>
            <person name="Sugiyama T."/>
            <person name="Irie R."/>
            <person name="Wakamatsu A."/>
            <person name="Hayashi K."/>
            <person name="Sato H."/>
            <person name="Nagai K."/>
            <person name="Kimura K."/>
            <person name="Makita H."/>
            <person name="Sekine M."/>
            <person name="Obayashi M."/>
            <person name="Nishi T."/>
            <person name="Shibahara T."/>
            <person name="Tanaka T."/>
            <person name="Ishii S."/>
            <person name="Yamamoto J."/>
            <person name="Saito K."/>
            <person name="Kawai Y."/>
            <person name="Isono Y."/>
            <person name="Nakamura Y."/>
            <person name="Nagahari K."/>
            <person name="Murakami K."/>
            <person name="Yasuda T."/>
            <person name="Iwayanagi T."/>
            <person name="Wagatsuma M."/>
            <person name="Shiratori A."/>
            <person name="Sudo H."/>
            <person name="Hosoiri T."/>
            <person name="Kaku Y."/>
            <person name="Kodaira H."/>
            <person name="Kondo H."/>
            <person name="Sugawara M."/>
            <person name="Takahashi M."/>
            <person name="Kanda K."/>
            <person name="Yokoi T."/>
            <person name="Furuya T."/>
            <person name="Kikkawa E."/>
            <person name="Omura Y."/>
            <person name="Abe K."/>
            <person name="Kamihara K."/>
            <person name="Katsuta N."/>
            <person name="Sato K."/>
            <person name="Tanikawa M."/>
            <person name="Yamazaki M."/>
            <person name="Ninomiya K."/>
            <person name="Ishibashi T."/>
            <person name="Yamashita H."/>
            <person name="Murakawa K."/>
            <person name="Fujimori K."/>
            <person name="Tanai H."/>
            <person name="Kimata M."/>
            <person name="Watanabe M."/>
            <person name="Hiraoka S."/>
            <person name="Chiba Y."/>
            <person name="Ishida S."/>
            <person name="Ono Y."/>
            <person name="Takiguchi S."/>
            <person name="Watanabe S."/>
            <person name="Yosida M."/>
            <person name="Hotuta T."/>
            <person name="Kusano J."/>
            <person name="Kanehori K."/>
            <person name="Takahashi-Fujii A."/>
            <person name="Hara H."/>
            <person name="Tanase T.-O."/>
            <person name="Nomura Y."/>
            <person name="Togiya S."/>
            <person name="Komai F."/>
            <person name="Hara R."/>
            <person name="Takeuchi K."/>
            <person name="Arita M."/>
            <person name="Imose N."/>
            <person name="Musashino K."/>
            <person name="Yuuki H."/>
            <person name="Oshima A."/>
            <person name="Sasaki N."/>
            <person name="Aotsuka S."/>
            <person name="Yoshikawa Y."/>
            <person name="Matsunawa H."/>
            <person name="Ichihara T."/>
            <person name="Shiohata N."/>
            <person name="Sano S."/>
            <person name="Moriya S."/>
            <person name="Momiyama H."/>
            <person name="Satoh N."/>
            <person name="Takami S."/>
            <person name="Terashima Y."/>
            <person name="Suzuki O."/>
            <person name="Nakagawa S."/>
            <person name="Senoh A."/>
            <person name="Mizoguchi H."/>
            <person name="Goto Y."/>
            <person name="Shimizu F."/>
            <person name="Wakebe H."/>
            <person name="Hishigaki H."/>
            <person name="Watanabe T."/>
            <person name="Sugiyama A."/>
            <person name="Takemoto M."/>
            <person name="Kawakami B."/>
            <person name="Yamazaki M."/>
            <person name="Watanabe K."/>
            <person name="Kumagai A."/>
            <person name="Itakura S."/>
            <person name="Fukuzumi Y."/>
            <person name="Fujimori Y."/>
            <person name="Komiyama M."/>
            <person name="Tashiro H."/>
            <person name="Tanigami A."/>
            <person name="Fujiwara T."/>
            <person name="Ono T."/>
            <person name="Yamada K."/>
            <person name="Fujii Y."/>
            <person name="Ozaki K."/>
            <person name="Hirao M."/>
            <person name="Ohmori Y."/>
            <person name="Kawabata A."/>
            <person name="Hikiji T."/>
            <person name="Kobatake N."/>
            <person name="Inagaki H."/>
            <person name="Ikema Y."/>
            <person name="Okamoto S."/>
            <person name="Okitani R."/>
            <person name="Kawakami T."/>
            <person name="Noguchi S."/>
            <person name="Itoh T."/>
            <person name="Shigeta K."/>
            <person name="Senba T."/>
            <person name="Matsumura K."/>
            <person name="Nakajima Y."/>
            <person name="Mizuno T."/>
            <person name="Morinaga M."/>
            <person name="Sasaki M."/>
            <person name="Togashi T."/>
            <person name="Oyama M."/>
            <person name="Hata H."/>
            <person name="Watanabe M."/>
            <person name="Komatsu T."/>
            <person name="Mizushima-Sugano J."/>
            <person name="Satoh T."/>
            <person name="Shirai Y."/>
            <person name="Takahashi Y."/>
            <person name="Nakagawa K."/>
            <person name="Okumura K."/>
            <person name="Nagase T."/>
            <person name="Nomura N."/>
            <person name="Kikuchi H."/>
            <person name="Masuho Y."/>
            <person name="Yamashita R."/>
            <person name="Nakai K."/>
            <person name="Yada T."/>
            <person name="Nakamura Y."/>
            <person name="Ohara O."/>
            <person name="Isogai T."/>
            <person name="Sugano S."/>
        </authorList>
    </citation>
    <scope>NUCLEOTIDE SEQUENCE [LARGE SCALE MRNA] OF 24-357</scope>
    <source>
        <tissue>Adipose tissue</tissue>
    </source>
</reference>
<reference key="4">
    <citation type="submission" date="2005-04" db="EMBL/GenBank/DDBJ databases">
        <authorList>
            <person name="Suzuki Y."/>
            <person name="Sugano S."/>
            <person name="Totoki Y."/>
            <person name="Toyoda A."/>
            <person name="Takeda T."/>
            <person name="Sakaki Y."/>
            <person name="Tanaka A."/>
            <person name="Yokoyama S."/>
        </authorList>
    </citation>
    <scope>NUCLEOTIDE SEQUENCE [LARGE SCALE MRNA] OF 24-357</scope>
    <source>
        <tissue>Adipose tissue</tissue>
    </source>
</reference>
<reference key="5">
    <citation type="journal article" date="2008" name="Proc. Natl. Acad. Sci. U.S.A.">
        <title>A quantitative atlas of mitotic phosphorylation.</title>
        <authorList>
            <person name="Dephoure N."/>
            <person name="Zhou C."/>
            <person name="Villen J."/>
            <person name="Beausoleil S.A."/>
            <person name="Bakalarski C.E."/>
            <person name="Elledge S.J."/>
            <person name="Gygi S.P."/>
        </authorList>
    </citation>
    <scope>PHOSPHORYLATION [LARGE SCALE ANALYSIS] AT THR-196 AND SER-199</scope>
    <scope>IDENTIFICATION BY MASS SPECTROMETRY [LARGE SCALE ANALYSIS]</scope>
    <source>
        <tissue>Cervix carcinoma</tissue>
    </source>
</reference>
<reference key="6">
    <citation type="journal article" date="2010" name="Sci. Signal.">
        <title>Quantitative phosphoproteomics reveals widespread full phosphorylation site occupancy during mitosis.</title>
        <authorList>
            <person name="Olsen J.V."/>
            <person name="Vermeulen M."/>
            <person name="Santamaria A."/>
            <person name="Kumar C."/>
            <person name="Miller M.L."/>
            <person name="Jensen L.J."/>
            <person name="Gnad F."/>
            <person name="Cox J."/>
            <person name="Jensen T.S."/>
            <person name="Nigg E.A."/>
            <person name="Brunak S."/>
            <person name="Mann M."/>
        </authorList>
    </citation>
    <scope>IDENTIFICATION BY MASS SPECTROMETRY [LARGE SCALE ANALYSIS]</scope>
    <source>
        <tissue>Cervix carcinoma</tissue>
    </source>
</reference>
<reference key="7">
    <citation type="journal article" date="2013" name="J. Proteome Res.">
        <title>Toward a comprehensive characterization of a human cancer cell phosphoproteome.</title>
        <authorList>
            <person name="Zhou H."/>
            <person name="Di Palma S."/>
            <person name="Preisinger C."/>
            <person name="Peng M."/>
            <person name="Polat A.N."/>
            <person name="Heck A.J."/>
            <person name="Mohammed S."/>
        </authorList>
    </citation>
    <scope>PHOSPHORYLATION [LARGE SCALE ANALYSIS] AT SER-168; THR-196 AND SER-199</scope>
    <scope>IDENTIFICATION BY MASS SPECTROMETRY [LARGE SCALE ANALYSIS]</scope>
    <source>
        <tissue>Cervix carcinoma</tissue>
        <tissue>Erythroleukemia</tissue>
    </source>
</reference>
<reference key="8">
    <citation type="journal article" date="2014" name="J. Proteomics">
        <title>An enzyme assisted RP-RPLC approach for in-depth analysis of human liver phosphoproteome.</title>
        <authorList>
            <person name="Bian Y."/>
            <person name="Song C."/>
            <person name="Cheng K."/>
            <person name="Dong M."/>
            <person name="Wang F."/>
            <person name="Huang J."/>
            <person name="Sun D."/>
            <person name="Wang L."/>
            <person name="Ye M."/>
            <person name="Zou H."/>
        </authorList>
    </citation>
    <scope>PHOSPHORYLATION [LARGE SCALE ANALYSIS] AT THR-196</scope>
    <scope>IDENTIFICATION BY MASS SPECTROMETRY [LARGE SCALE ANALYSIS]</scope>
    <source>
        <tissue>Liver</tissue>
    </source>
</reference>
<reference key="9">
    <citation type="journal article" date="2015" name="Dev. Cell">
        <title>BORC, a multisubunit complex that regulates lysosome positioning.</title>
        <authorList>
            <person name="Pu J."/>
            <person name="Schindler C."/>
            <person name="Jia R."/>
            <person name="Jarnik M."/>
            <person name="Backlund P."/>
            <person name="Bonifacino J.S."/>
        </authorList>
    </citation>
    <scope>FUNCTION</scope>
    <scope>IDENTIFICATION OF THE BORC COMPLEX</scope>
    <scope>SUBCELLULAR LOCATION</scope>
</reference>
<organism>
    <name type="scientific">Homo sapiens</name>
    <name type="common">Human</name>
    <dbReference type="NCBI Taxonomy" id="9606"/>
    <lineage>
        <taxon>Eukaryota</taxon>
        <taxon>Metazoa</taxon>
        <taxon>Chordata</taxon>
        <taxon>Craniata</taxon>
        <taxon>Vertebrata</taxon>
        <taxon>Euteleostomi</taxon>
        <taxon>Mammalia</taxon>
        <taxon>Eutheria</taxon>
        <taxon>Euarchontoglires</taxon>
        <taxon>Primates</taxon>
        <taxon>Haplorrhini</taxon>
        <taxon>Catarrhini</taxon>
        <taxon>Hominidae</taxon>
        <taxon>Homo</taxon>
    </lineage>
</organism>
<name>BORC6_HUMAN</name>
<evidence type="ECO:0000256" key="1">
    <source>
        <dbReference type="SAM" id="MobiDB-lite"/>
    </source>
</evidence>
<evidence type="ECO:0000269" key="2">
    <source>
    </source>
</evidence>
<evidence type="ECO:0000303" key="3">
    <source>
    </source>
</evidence>
<evidence type="ECO:0000305" key="4"/>
<evidence type="ECO:0000305" key="5">
    <source>
    </source>
</evidence>
<evidence type="ECO:0000312" key="6">
    <source>
        <dbReference type="HGNC" id="HGNC:25939"/>
    </source>
</evidence>
<evidence type="ECO:0007744" key="7">
    <source>
    </source>
</evidence>
<evidence type="ECO:0007744" key="8">
    <source>
    </source>
</evidence>
<evidence type="ECO:0007744" key="9">
    <source>
    </source>
</evidence>
<dbReference type="EMBL" id="AC129492">
    <property type="status" value="NOT_ANNOTATED_CDS"/>
    <property type="molecule type" value="Genomic_DNA"/>
</dbReference>
<dbReference type="EMBL" id="BC009261">
    <property type="protein sequence ID" value="AAH09261.1"/>
    <property type="status" value="ALT_INIT"/>
    <property type="molecule type" value="mRNA"/>
</dbReference>
<dbReference type="EMBL" id="BC018880">
    <property type="protein sequence ID" value="AAH18880.1"/>
    <property type="status" value="ALT_INIT"/>
    <property type="molecule type" value="mRNA"/>
</dbReference>
<dbReference type="EMBL" id="BC070272">
    <property type="protein sequence ID" value="AAH70272.1"/>
    <property type="status" value="ALT_INIT"/>
    <property type="molecule type" value="mRNA"/>
</dbReference>
<dbReference type="EMBL" id="AK000021">
    <property type="protein sequence ID" value="BAA90889.1"/>
    <property type="status" value="ALT_INIT"/>
    <property type="molecule type" value="mRNA"/>
</dbReference>
<dbReference type="EMBL" id="AK222506">
    <property type="protein sequence ID" value="BAD96226.1"/>
    <property type="status" value="ALT_INIT"/>
    <property type="molecule type" value="mRNA"/>
</dbReference>
<dbReference type="CCDS" id="CCDS11133.2"/>
<dbReference type="RefSeq" id="NP_060092.2">
    <property type="nucleotide sequence ID" value="NM_017622.3"/>
</dbReference>
<dbReference type="BioGRID" id="120149">
    <property type="interactions" value="175"/>
</dbReference>
<dbReference type="ComplexPortal" id="CPX-5029">
    <property type="entry name" value="BORC complex"/>
</dbReference>
<dbReference type="CORUM" id="Q96GS4"/>
<dbReference type="DIP" id="DIP-29465N"/>
<dbReference type="FunCoup" id="Q96GS4">
    <property type="interactions" value="162"/>
</dbReference>
<dbReference type="IntAct" id="Q96GS4">
    <property type="interactions" value="104"/>
</dbReference>
<dbReference type="MINT" id="Q96GS4"/>
<dbReference type="STRING" id="9606.ENSP00000373669"/>
<dbReference type="GlyGen" id="Q96GS4">
    <property type="glycosylation" value="2 sites"/>
</dbReference>
<dbReference type="iPTMnet" id="Q96GS4"/>
<dbReference type="MetOSite" id="Q96GS4"/>
<dbReference type="PhosphoSitePlus" id="Q96GS4"/>
<dbReference type="SwissPalm" id="Q96GS4"/>
<dbReference type="BioMuta" id="BORCS6"/>
<dbReference type="DMDM" id="296434462"/>
<dbReference type="jPOST" id="Q96GS4"/>
<dbReference type="MassIVE" id="Q96GS4"/>
<dbReference type="PaxDb" id="9606-ENSP00000373669"/>
<dbReference type="PeptideAtlas" id="Q96GS4"/>
<dbReference type="ProteomicsDB" id="76660"/>
<dbReference type="Pumba" id="Q96GS4"/>
<dbReference type="Antibodypedia" id="47971">
    <property type="antibodies" value="106 antibodies from 16 providers"/>
</dbReference>
<dbReference type="DNASU" id="54785"/>
<dbReference type="Ensembl" id="ENST00000389017.6">
    <property type="protein sequence ID" value="ENSP00000373669.4"/>
    <property type="gene ID" value="ENSG00000196544.8"/>
</dbReference>
<dbReference type="GeneID" id="54785"/>
<dbReference type="KEGG" id="hsa:54785"/>
<dbReference type="MANE-Select" id="ENST00000389017.6">
    <property type="protein sequence ID" value="ENSP00000373669.4"/>
    <property type="RefSeq nucleotide sequence ID" value="NM_017622.3"/>
    <property type="RefSeq protein sequence ID" value="NP_060092.2"/>
</dbReference>
<dbReference type="UCSC" id="uc010vut.3">
    <property type="organism name" value="human"/>
</dbReference>
<dbReference type="AGR" id="HGNC:25939"/>
<dbReference type="CTD" id="54785"/>
<dbReference type="DisGeNET" id="54785"/>
<dbReference type="GeneCards" id="BORCS6"/>
<dbReference type="HGNC" id="HGNC:25939">
    <property type="gene designation" value="BORCS6"/>
</dbReference>
<dbReference type="HPA" id="ENSG00000196544">
    <property type="expression patterns" value="Low tissue specificity"/>
</dbReference>
<dbReference type="MIM" id="616599">
    <property type="type" value="gene"/>
</dbReference>
<dbReference type="neXtProt" id="NX_Q96GS4"/>
<dbReference type="OpenTargets" id="ENSG00000196544"/>
<dbReference type="PharmGKB" id="PA142672242"/>
<dbReference type="VEuPathDB" id="HostDB:ENSG00000196544"/>
<dbReference type="eggNOG" id="KOG4514">
    <property type="taxonomic scope" value="Eukaryota"/>
</dbReference>
<dbReference type="GeneTree" id="ENSGT00490000043453"/>
<dbReference type="HOGENOM" id="CLU_782948_0_0_1"/>
<dbReference type="InParanoid" id="Q96GS4"/>
<dbReference type="OMA" id="PPEWEAP"/>
<dbReference type="OrthoDB" id="21270at2759"/>
<dbReference type="PAN-GO" id="Q96GS4">
    <property type="GO annotations" value="2 GO annotations based on evolutionary models"/>
</dbReference>
<dbReference type="PhylomeDB" id="Q96GS4"/>
<dbReference type="PathwayCommons" id="Q96GS4"/>
<dbReference type="SignaLink" id="Q96GS4"/>
<dbReference type="BioGRID-ORCS" id="54785">
    <property type="hits" value="17 hits in 1118 CRISPR screens"/>
</dbReference>
<dbReference type="ChiTaRS" id="BORCS6">
    <property type="organism name" value="human"/>
</dbReference>
<dbReference type="GenomeRNAi" id="54785"/>
<dbReference type="Pharos" id="Q96GS4">
    <property type="development level" value="Tdark"/>
</dbReference>
<dbReference type="PRO" id="PR:Q96GS4"/>
<dbReference type="Proteomes" id="UP000005640">
    <property type="component" value="Chromosome 17"/>
</dbReference>
<dbReference type="RNAct" id="Q96GS4">
    <property type="molecule type" value="protein"/>
</dbReference>
<dbReference type="Bgee" id="ENSG00000196544">
    <property type="expression patterns" value="Expressed in granulocyte and 154 other cell types or tissues"/>
</dbReference>
<dbReference type="GO" id="GO:0099078">
    <property type="term" value="C:BORC complex"/>
    <property type="evidence" value="ECO:0000314"/>
    <property type="project" value="UniProtKB"/>
</dbReference>
<dbReference type="GO" id="GO:0098574">
    <property type="term" value="C:cytoplasmic side of lysosomal membrane"/>
    <property type="evidence" value="ECO:0000303"/>
    <property type="project" value="ComplexPortal"/>
</dbReference>
<dbReference type="GO" id="GO:0042802">
    <property type="term" value="F:identical protein binding"/>
    <property type="evidence" value="ECO:0000353"/>
    <property type="project" value="IntAct"/>
</dbReference>
<dbReference type="GO" id="GO:0032418">
    <property type="term" value="P:lysosome localization"/>
    <property type="evidence" value="ECO:0000315"/>
    <property type="project" value="UniProtKB"/>
</dbReference>
<dbReference type="GO" id="GO:0072384">
    <property type="term" value="P:organelle transport along microtubule"/>
    <property type="evidence" value="ECO:0000303"/>
    <property type="project" value="ComplexPortal"/>
</dbReference>
<dbReference type="GO" id="GO:0051036">
    <property type="term" value="P:regulation of endosome size"/>
    <property type="evidence" value="ECO:0000303"/>
    <property type="project" value="ComplexPortal"/>
</dbReference>
<dbReference type="GO" id="GO:0062196">
    <property type="term" value="P:regulation of lysosome size"/>
    <property type="evidence" value="ECO:0000303"/>
    <property type="project" value="ComplexPortal"/>
</dbReference>
<dbReference type="InterPro" id="IPR019314">
    <property type="entry name" value="BORCS6"/>
</dbReference>
<dbReference type="InterPro" id="IPR046465">
    <property type="entry name" value="BORCS6_C"/>
</dbReference>
<dbReference type="PANTHER" id="PTHR13440">
    <property type="entry name" value="BLOC-1 RELATED COMPLEX SUBUNIT 6"/>
    <property type="match status" value="1"/>
</dbReference>
<dbReference type="PANTHER" id="PTHR13440:SF8">
    <property type="entry name" value="BLOC-1-RELATED COMPLEX SUBUNIT 6"/>
    <property type="match status" value="1"/>
</dbReference>
<dbReference type="Pfam" id="PF10157">
    <property type="entry name" value="BORCS6"/>
    <property type="match status" value="1"/>
</dbReference>
<feature type="chain" id="PRO_0000286827" description="BLOC-1-related complex subunit 6">
    <location>
        <begin position="1"/>
        <end position="357"/>
    </location>
</feature>
<feature type="region of interest" description="Disordered" evidence="1">
    <location>
        <begin position="20"/>
        <end position="196"/>
    </location>
</feature>
<feature type="region of interest" description="Disordered" evidence="1">
    <location>
        <begin position="227"/>
        <end position="256"/>
    </location>
</feature>
<feature type="compositionally biased region" description="Low complexity" evidence="1">
    <location>
        <begin position="90"/>
        <end position="99"/>
    </location>
</feature>
<feature type="compositionally biased region" description="Acidic residues" evidence="1">
    <location>
        <begin position="138"/>
        <end position="149"/>
    </location>
</feature>
<feature type="compositionally biased region" description="Low complexity" evidence="1">
    <location>
        <begin position="150"/>
        <end position="162"/>
    </location>
</feature>
<feature type="compositionally biased region" description="Pro residues" evidence="1">
    <location>
        <begin position="230"/>
        <end position="256"/>
    </location>
</feature>
<feature type="modified residue" description="Phosphoserine" evidence="8">
    <location>
        <position position="168"/>
    </location>
</feature>
<feature type="modified residue" description="Phosphothreonine" evidence="7 8 9">
    <location>
        <position position="196"/>
    </location>
</feature>
<feature type="modified residue" description="Phosphoserine" evidence="7 8">
    <location>
        <position position="199"/>
    </location>
</feature>
<feature type="sequence conflict" description="In Ref. 3; BAA90889." evidence="4" ref="3">
    <original>E</original>
    <variation>K</variation>
    <location>
        <position position="202"/>
    </location>
</feature>
<feature type="sequence conflict" description="In Ref. 3; BAA90889 and 4; BAD96226." evidence="4" ref="3 4">
    <original>Q</original>
    <variation>R</variation>
    <location>
        <position position="336"/>
    </location>
</feature>
<accession>Q96GS4</accession>
<accession>Q53HS4</accession>
<accession>Q9NXW8</accession>
<keyword id="KW-0458">Lysosome</keyword>
<keyword id="KW-0472">Membrane</keyword>
<keyword id="KW-0597">Phosphoprotein</keyword>
<keyword id="KW-1267">Proteomics identification</keyword>
<keyword id="KW-1185">Reference proteome</keyword>
<proteinExistence type="evidence at protein level"/>
<sequence length="357" mass="37226">MESSRGRPGPETDLLAVAEHQALVFGGGPGRTSSEPPAGLRVSGEEETENVGGANRHPRTSPKTSSCGVVHRPEREALENEPGPQGTLSGAGSRRGAPGAEHEPSLSSRHKNPAPPEGKPSSGRDCRRGGPGGGMDVEQQEEEDNDEEAAAGSRAGRSFSSRLQDSRSLDGLSEACGGAGSSGSAESGAGGGRRATISSPLELEGTVSRHGDLTHFVANNLQLKIRLSGAPPPPPSAPARPCPAPAPTPTPAIPPIDPEVLRDLERLSRELGGRVDRLLRGLGGAVQELTALSVGCIQTYRDAVDSLGEAVDMSIKGMYTLLARCEELERALQPVQGLARQVRDIRRTLEVLEALCK</sequence>
<gene>
    <name evidence="6" type="primary">BORCS6</name>
    <name evidence="6" type="synonym">C17orf59</name>
</gene>
<protein>
    <recommendedName>
        <fullName evidence="4">BLOC-1-related complex subunit 6</fullName>
    </recommendedName>
    <alternativeName>
        <fullName evidence="3">Lysosome-dispersing protein</fullName>
        <shortName evidence="3">Lyspersin</shortName>
    </alternativeName>
</protein>